<accession>Q5R8D6</accession>
<comment type="function">
    <text evidence="1">May play a role in the process of maturation of dendritic cells. Required for the development of cerebellar granule cells (By similarity).</text>
</comment>
<comment type="subcellular location">
    <subcellularLocation>
        <location evidence="1">Nucleus membrane</location>
        <topology evidence="1">Multi-pass membrane protein</topology>
    </subcellularLocation>
</comment>
<comment type="similarity">
    <text evidence="6">Belongs to the TMEM176 family.</text>
</comment>
<reference key="1">
    <citation type="submission" date="2004-11" db="EMBL/GenBank/DDBJ databases">
        <authorList>
            <consortium name="The German cDNA consortium"/>
        </authorList>
    </citation>
    <scope>NUCLEOTIDE SEQUENCE [LARGE SCALE MRNA]</scope>
    <source>
        <tissue>Kidney</tissue>
    </source>
</reference>
<protein>
    <recommendedName>
        <fullName>Transmembrane protein 176B</fullName>
    </recommendedName>
</protein>
<keyword id="KW-0221">Differentiation</keyword>
<keyword id="KW-0472">Membrane</keyword>
<keyword id="KW-0539">Nucleus</keyword>
<keyword id="KW-0597">Phosphoprotein</keyword>
<keyword id="KW-1185">Reference proteome</keyword>
<keyword id="KW-0812">Transmembrane</keyword>
<keyword id="KW-1133">Transmembrane helix</keyword>
<organism>
    <name type="scientific">Pongo abelii</name>
    <name type="common">Sumatran orangutan</name>
    <name type="synonym">Pongo pygmaeus abelii</name>
    <dbReference type="NCBI Taxonomy" id="9601"/>
    <lineage>
        <taxon>Eukaryota</taxon>
        <taxon>Metazoa</taxon>
        <taxon>Chordata</taxon>
        <taxon>Craniata</taxon>
        <taxon>Vertebrata</taxon>
        <taxon>Euteleostomi</taxon>
        <taxon>Mammalia</taxon>
        <taxon>Eutheria</taxon>
        <taxon>Euarchontoglires</taxon>
        <taxon>Primates</taxon>
        <taxon>Haplorrhini</taxon>
        <taxon>Catarrhini</taxon>
        <taxon>Hominidae</taxon>
        <taxon>Pongo</taxon>
    </lineage>
</organism>
<feature type="chain" id="PRO_0000279877" description="Transmembrane protein 176B">
    <location>
        <begin position="1"/>
        <end position="270"/>
    </location>
</feature>
<feature type="transmembrane region" description="Helical" evidence="4">
    <location>
        <begin position="65"/>
        <end position="85"/>
    </location>
</feature>
<feature type="transmembrane region" description="Helical" evidence="4">
    <location>
        <begin position="95"/>
        <end position="115"/>
    </location>
</feature>
<feature type="transmembrane region" description="Helical" evidence="4">
    <location>
        <begin position="127"/>
        <end position="147"/>
    </location>
</feature>
<feature type="transmembrane region" description="Helical" evidence="4">
    <location>
        <begin position="209"/>
        <end position="229"/>
    </location>
</feature>
<feature type="region of interest" description="Disordered" evidence="5">
    <location>
        <begin position="237"/>
        <end position="270"/>
    </location>
</feature>
<feature type="compositionally biased region" description="Polar residues" evidence="5">
    <location>
        <begin position="260"/>
        <end position="270"/>
    </location>
</feature>
<feature type="modified residue" description="Phosphoserine" evidence="2">
    <location>
        <position position="236"/>
    </location>
</feature>
<feature type="modified residue" description="Phosphoserine" evidence="2">
    <location>
        <position position="245"/>
    </location>
</feature>
<feature type="modified residue" description="Phosphoserine" evidence="3">
    <location>
        <position position="254"/>
    </location>
</feature>
<feature type="modified residue" description="Phosphoserine" evidence="2">
    <location>
        <position position="258"/>
    </location>
</feature>
<evidence type="ECO:0000250" key="1"/>
<evidence type="ECO:0000250" key="2">
    <source>
        <dbReference type="UniProtKB" id="Q3YBM2"/>
    </source>
</evidence>
<evidence type="ECO:0000250" key="3">
    <source>
        <dbReference type="UniProtKB" id="Q925D4"/>
    </source>
</evidence>
<evidence type="ECO:0000255" key="4"/>
<evidence type="ECO:0000256" key="5">
    <source>
        <dbReference type="SAM" id="MobiDB-lite"/>
    </source>
</evidence>
<evidence type="ECO:0000305" key="6"/>
<name>T176B_PONAB</name>
<dbReference type="EMBL" id="CR859817">
    <property type="protein sequence ID" value="CAH91974.1"/>
    <property type="molecule type" value="mRNA"/>
</dbReference>
<dbReference type="RefSeq" id="NP_001127489.1">
    <property type="nucleotide sequence ID" value="NM_001134017.1"/>
</dbReference>
<dbReference type="RefSeq" id="XP_024105152.1">
    <property type="nucleotide sequence ID" value="XM_024249384.3"/>
</dbReference>
<dbReference type="RefSeq" id="XP_063581671.1">
    <property type="nucleotide sequence ID" value="XM_063725601.1"/>
</dbReference>
<dbReference type="FunCoup" id="Q5R8D6">
    <property type="interactions" value="1"/>
</dbReference>
<dbReference type="Ensembl" id="ENSPPYT00000037280.1">
    <property type="protein sequence ID" value="ENSPPYP00000042841.1"/>
    <property type="gene ID" value="ENSPPYG00000018174.2"/>
</dbReference>
<dbReference type="GeneID" id="100174564"/>
<dbReference type="KEGG" id="pon:100174564"/>
<dbReference type="CTD" id="28959"/>
<dbReference type="eggNOG" id="ENOG502SF8T">
    <property type="taxonomic scope" value="Eukaryota"/>
</dbReference>
<dbReference type="GeneTree" id="ENSGT00530000064074"/>
<dbReference type="InParanoid" id="Q5R8D6"/>
<dbReference type="OMA" id="WEEDRCR"/>
<dbReference type="OrthoDB" id="8951938at2759"/>
<dbReference type="Proteomes" id="UP000001595">
    <property type="component" value="Chromosome 7"/>
</dbReference>
<dbReference type="GO" id="GO:0031965">
    <property type="term" value="C:nuclear membrane"/>
    <property type="evidence" value="ECO:0007669"/>
    <property type="project" value="UniProtKB-SubCell"/>
</dbReference>
<dbReference type="GO" id="GO:0097028">
    <property type="term" value="P:dendritic cell differentiation"/>
    <property type="evidence" value="ECO:0007669"/>
    <property type="project" value="Ensembl"/>
</dbReference>
<dbReference type="GO" id="GO:2001199">
    <property type="term" value="P:negative regulation of dendritic cell differentiation"/>
    <property type="evidence" value="ECO:0007669"/>
    <property type="project" value="Ensembl"/>
</dbReference>
<dbReference type="InterPro" id="IPR007237">
    <property type="entry name" value="CD20-like"/>
</dbReference>
<dbReference type="InterPro" id="IPR009281">
    <property type="entry name" value="TMEM176A/TMEM176B"/>
</dbReference>
<dbReference type="PANTHER" id="PTHR15756">
    <property type="entry name" value="LR8/HCA112"/>
    <property type="match status" value="1"/>
</dbReference>
<dbReference type="PANTHER" id="PTHR15756:SF7">
    <property type="entry name" value="TRANSMEMBRANE PROTEIN 176B"/>
    <property type="match status" value="1"/>
</dbReference>
<dbReference type="Pfam" id="PF04103">
    <property type="entry name" value="CD20"/>
    <property type="match status" value="1"/>
</dbReference>
<gene>
    <name type="primary">TMEM176B</name>
</gene>
<sequence>MTQNTVIVNGVAMDSRPSQPTHINVHIHQESALTQLLKAGGSLKKFLFHPGDTVPSTARIGYEQLALGVTQILLGVLSCALGVCLSLGPWTVLRASGCAFWAGSVAIAAGAGAIVHEKYPGKLAGYVSSLLTLAGFATVMAAVVLCVNSFIWQTEPFLYIDTVCDRSDPVIPTTGYGWMWRSEEIQRQKEECRAYMQMLRKLFTAIRALFLAVCVLKVIVSLASLGVGLRNLCGQSSQPLNEEGSEKRLLGENSVPPSPSREQTSTAIVL</sequence>
<proteinExistence type="evidence at transcript level"/>